<organism>
    <name type="scientific">Methanothermobacter thermautotrophicus (strain ATCC 29096 / DSM 1053 / JCM 10044 / NBRC 100330 / Delta H)</name>
    <name type="common">Methanobacterium thermoautotrophicum</name>
    <dbReference type="NCBI Taxonomy" id="187420"/>
    <lineage>
        <taxon>Archaea</taxon>
        <taxon>Methanobacteriati</taxon>
        <taxon>Methanobacteriota</taxon>
        <taxon>Methanomada group</taxon>
        <taxon>Methanobacteria</taxon>
        <taxon>Methanobacteriales</taxon>
        <taxon>Methanobacteriaceae</taxon>
        <taxon>Methanothermobacter</taxon>
    </lineage>
</organism>
<proteinExistence type="inferred from homology"/>
<reference key="1">
    <citation type="journal article" date="1997" name="J. Bacteriol.">
        <title>Complete genome sequence of Methanobacterium thermoautotrophicum deltaH: functional analysis and comparative genomics.</title>
        <authorList>
            <person name="Smith D.R."/>
            <person name="Doucette-Stamm L.A."/>
            <person name="Deloughery C."/>
            <person name="Lee H.-M."/>
            <person name="Dubois J."/>
            <person name="Aldredge T."/>
            <person name="Bashirzadeh R."/>
            <person name="Blakely D."/>
            <person name="Cook R."/>
            <person name="Gilbert K."/>
            <person name="Harrison D."/>
            <person name="Hoang L."/>
            <person name="Keagle P."/>
            <person name="Lumm W."/>
            <person name="Pothier B."/>
            <person name="Qiu D."/>
            <person name="Spadafora R."/>
            <person name="Vicare R."/>
            <person name="Wang Y."/>
            <person name="Wierzbowski J."/>
            <person name="Gibson R."/>
            <person name="Jiwani N."/>
            <person name="Caruso A."/>
            <person name="Bush D."/>
            <person name="Safer H."/>
            <person name="Patwell D."/>
            <person name="Prabhakar S."/>
            <person name="McDougall S."/>
            <person name="Shimer G."/>
            <person name="Goyal A."/>
            <person name="Pietrovski S."/>
            <person name="Church G.M."/>
            <person name="Daniels C.J."/>
            <person name="Mao J.-I."/>
            <person name="Rice P."/>
            <person name="Noelling J."/>
            <person name="Reeve J.N."/>
        </authorList>
    </citation>
    <scope>NUCLEOTIDE SEQUENCE [LARGE SCALE GENOMIC DNA]</scope>
    <source>
        <strain>ATCC 29096 / DSM 1053 / JCM 10044 / NBRC 100330 / Delta H</strain>
    </source>
</reference>
<evidence type="ECO:0000250" key="1"/>
<evidence type="ECO:0000250" key="2">
    <source>
        <dbReference type="UniProtKB" id="O07835"/>
    </source>
</evidence>
<evidence type="ECO:0000255" key="3">
    <source>
        <dbReference type="PROSITE-ProRule" id="PRU00711"/>
    </source>
</evidence>
<gene>
    <name type="primary">iorA</name>
    <name type="ordered locus">MTH_1852</name>
</gene>
<protein>
    <recommendedName>
        <fullName>Indolepyruvate oxidoreductase subunit IorA</fullName>
        <shortName>IOR</shortName>
        <ecNumber>1.2.7.8</ecNumber>
    </recommendedName>
    <alternativeName>
        <fullName>Indolepyruvate ferredoxin oxidoreductase subunit alpha</fullName>
    </alternativeName>
</protein>
<name>IORA_METTH</name>
<sequence length="618" mass="66871">MELEDILNAREGDKLFLLGNEATVRAAIESGVGVASTYPGTPSSEIGNVLSGIAKRAGMYFEFSVNEKVALEVAAAAAASGVRSFTFMKHVGLNVASDSFMSTAYTGVRAGMVVLTADDPSMFSSQNEQDNRHYARLACLPLLEPSDPQEVLEFMNHAFELSEDYGLPVLLRTTTRVSHMRGVVEVGSRMREPSEGFFRKDPERFVPVPATARVMHRKLVDKMKELRIRADESELNRVFNGGSDSELGVVASGGAFNYVYDALESLGLELPVLKLGFTYPFPAGLVEEFLSGLKRVLVVEEVDPIMEREVLAVAGSARLDLDVHGKLDGTLPEIYEYNEDILRKAISGLTGAPSVERECDVPDIPERPPSLCPGCPHRAVYYAVRRAADELELSGDEIIFPTDIGCYTLGIEPPYSAADYLLSMGSSIGTSCGFSAATTQRIVSFIGDSTFFHAGIPPLINAVHNKQRFVLVVLDNRTTAMTGGQPHPGLPVDGMGDEAPEISIEEIVRASGVEFVETVNPMNIKRTSETVKRALEHESVAVVISKYPCMLSSGAVRGRPMAVDGEKCDLCLECIRDLACPAMVTREGEVFIDPLKCRGCSVCLQICPAGAIKPEGKG</sequence>
<feature type="chain" id="PRO_0000099926" description="Indolepyruvate oxidoreductase subunit IorA">
    <location>
        <begin position="1"/>
        <end position="618"/>
    </location>
</feature>
<feature type="domain" description="4Fe-4S ferredoxin-type 1" evidence="3">
    <location>
        <begin position="558"/>
        <end position="587"/>
    </location>
</feature>
<feature type="domain" description="4Fe-4S ferredoxin-type 2" evidence="3">
    <location>
        <begin position="588"/>
        <end position="617"/>
    </location>
</feature>
<feature type="binding site" evidence="2">
    <location>
        <position position="568"/>
    </location>
    <ligand>
        <name>[4Fe-4S] cluster</name>
        <dbReference type="ChEBI" id="CHEBI:49883"/>
        <label>1</label>
    </ligand>
</feature>
<feature type="binding site" evidence="2">
    <location>
        <position position="571"/>
    </location>
    <ligand>
        <name>[4Fe-4S] cluster</name>
        <dbReference type="ChEBI" id="CHEBI:49883"/>
        <label>1</label>
    </ligand>
</feature>
<feature type="binding site" evidence="2">
    <location>
        <position position="574"/>
    </location>
    <ligand>
        <name>[4Fe-4S] cluster</name>
        <dbReference type="ChEBI" id="CHEBI:49883"/>
        <label>1</label>
    </ligand>
</feature>
<feature type="binding site" evidence="2">
    <location>
        <position position="580"/>
    </location>
    <ligand>
        <name>[4Fe-4S] cluster</name>
        <dbReference type="ChEBI" id="CHEBI:49883"/>
        <label>2</label>
    </ligand>
</feature>
<feature type="binding site" evidence="2">
    <location>
        <position position="597"/>
    </location>
    <ligand>
        <name>[4Fe-4S] cluster</name>
        <dbReference type="ChEBI" id="CHEBI:49883"/>
        <label>2</label>
    </ligand>
</feature>
<feature type="binding site" evidence="2">
    <location>
        <position position="600"/>
    </location>
    <ligand>
        <name>[4Fe-4S] cluster</name>
        <dbReference type="ChEBI" id="CHEBI:49883"/>
        <label>2</label>
    </ligand>
</feature>
<feature type="binding site" evidence="2">
    <location>
        <position position="603"/>
    </location>
    <ligand>
        <name>[4Fe-4S] cluster</name>
        <dbReference type="ChEBI" id="CHEBI:49883"/>
        <label>2</label>
    </ligand>
</feature>
<feature type="binding site" evidence="2">
    <location>
        <position position="607"/>
    </location>
    <ligand>
        <name>[4Fe-4S] cluster</name>
        <dbReference type="ChEBI" id="CHEBI:49883"/>
        <label>1</label>
    </ligand>
</feature>
<keyword id="KW-0004">4Fe-4S</keyword>
<keyword id="KW-0249">Electron transport</keyword>
<keyword id="KW-0408">Iron</keyword>
<keyword id="KW-0411">Iron-sulfur</keyword>
<keyword id="KW-0479">Metal-binding</keyword>
<keyword id="KW-0560">Oxidoreductase</keyword>
<keyword id="KW-1185">Reference proteome</keyword>
<keyword id="KW-0677">Repeat</keyword>
<keyword id="KW-0813">Transport</keyword>
<dbReference type="EC" id="1.2.7.8"/>
<dbReference type="EMBL" id="AE000666">
    <property type="protein sequence ID" value="AAB86318.1"/>
    <property type="molecule type" value="Genomic_DNA"/>
</dbReference>
<dbReference type="PIR" id="G69114">
    <property type="entry name" value="G69114"/>
</dbReference>
<dbReference type="RefSeq" id="WP_010877454.1">
    <property type="nucleotide sequence ID" value="NC_000916.1"/>
</dbReference>
<dbReference type="STRING" id="187420.MTH_1852"/>
<dbReference type="PaxDb" id="187420-MTH_1852"/>
<dbReference type="EnsemblBacteria" id="AAB86318">
    <property type="protein sequence ID" value="AAB86318"/>
    <property type="gene ID" value="MTH_1852"/>
</dbReference>
<dbReference type="GeneID" id="1470937"/>
<dbReference type="GeneID" id="77402364"/>
<dbReference type="KEGG" id="mth:MTH_1852"/>
<dbReference type="PATRIC" id="fig|187420.15.peg.1805"/>
<dbReference type="HOGENOM" id="CLU_017727_0_0_2"/>
<dbReference type="InParanoid" id="O27880"/>
<dbReference type="Proteomes" id="UP000005223">
    <property type="component" value="Chromosome"/>
</dbReference>
<dbReference type="GO" id="GO:0051539">
    <property type="term" value="F:4 iron, 4 sulfur cluster binding"/>
    <property type="evidence" value="ECO:0007669"/>
    <property type="project" value="UniProtKB-KW"/>
</dbReference>
<dbReference type="GO" id="GO:0043805">
    <property type="term" value="F:indolepyruvate ferredoxin oxidoreductase activity"/>
    <property type="evidence" value="ECO:0007669"/>
    <property type="project" value="UniProtKB-EC"/>
</dbReference>
<dbReference type="GO" id="GO:0046872">
    <property type="term" value="F:metal ion binding"/>
    <property type="evidence" value="ECO:0007669"/>
    <property type="project" value="UniProtKB-KW"/>
</dbReference>
<dbReference type="GO" id="GO:0030976">
    <property type="term" value="F:thiamine pyrophosphate binding"/>
    <property type="evidence" value="ECO:0007669"/>
    <property type="project" value="InterPro"/>
</dbReference>
<dbReference type="GO" id="GO:0006082">
    <property type="term" value="P:organic acid metabolic process"/>
    <property type="evidence" value="ECO:0007669"/>
    <property type="project" value="UniProtKB-ARBA"/>
</dbReference>
<dbReference type="GO" id="GO:0044272">
    <property type="term" value="P:sulfur compound biosynthetic process"/>
    <property type="evidence" value="ECO:0007669"/>
    <property type="project" value="UniProtKB-ARBA"/>
</dbReference>
<dbReference type="CDD" id="cd02008">
    <property type="entry name" value="TPP_IOR_alpha"/>
    <property type="match status" value="1"/>
</dbReference>
<dbReference type="CDD" id="cd07034">
    <property type="entry name" value="TPP_PYR_PFOR_IOR-alpha_like"/>
    <property type="match status" value="1"/>
</dbReference>
<dbReference type="FunFam" id="3.40.50.970:FF:000039">
    <property type="entry name" value="Indolepyruvate oxidoreductase subunit IorA"/>
    <property type="match status" value="1"/>
</dbReference>
<dbReference type="Gene3D" id="3.30.70.20">
    <property type="match status" value="1"/>
</dbReference>
<dbReference type="Gene3D" id="3.40.50.920">
    <property type="match status" value="1"/>
</dbReference>
<dbReference type="Gene3D" id="3.40.50.970">
    <property type="match status" value="2"/>
</dbReference>
<dbReference type="InterPro" id="IPR017896">
    <property type="entry name" value="4Fe4S_Fe-S-bd"/>
</dbReference>
<dbReference type="InterPro" id="IPR017900">
    <property type="entry name" value="4Fe4S_Fe_S_CS"/>
</dbReference>
<dbReference type="InterPro" id="IPR045025">
    <property type="entry name" value="HACL1-like"/>
</dbReference>
<dbReference type="InterPro" id="IPR017721">
    <property type="entry name" value="IorA"/>
</dbReference>
<dbReference type="InterPro" id="IPR002880">
    <property type="entry name" value="Pyrv_Fd/Flavodoxin_OxRdtase_N"/>
</dbReference>
<dbReference type="InterPro" id="IPR029061">
    <property type="entry name" value="THDP-binding"/>
</dbReference>
<dbReference type="InterPro" id="IPR011766">
    <property type="entry name" value="TPP_enzyme_TPP-bd"/>
</dbReference>
<dbReference type="InterPro" id="IPR009014">
    <property type="entry name" value="Transketo_C/PFOR_II"/>
</dbReference>
<dbReference type="NCBIfam" id="TIGR03336">
    <property type="entry name" value="IOR_alpha"/>
    <property type="match status" value="1"/>
</dbReference>
<dbReference type="PANTHER" id="PTHR43710">
    <property type="entry name" value="2-HYDROXYACYL-COA LYASE"/>
    <property type="match status" value="1"/>
</dbReference>
<dbReference type="PANTHER" id="PTHR43710:SF7">
    <property type="entry name" value="INDOLEPYRUVATE OXIDOREDUCTASE SUBUNIT IORA"/>
    <property type="match status" value="1"/>
</dbReference>
<dbReference type="Pfam" id="PF00037">
    <property type="entry name" value="Fer4"/>
    <property type="match status" value="1"/>
</dbReference>
<dbReference type="Pfam" id="PF01855">
    <property type="entry name" value="POR_N"/>
    <property type="match status" value="1"/>
</dbReference>
<dbReference type="Pfam" id="PF02775">
    <property type="entry name" value="TPP_enzyme_C"/>
    <property type="match status" value="1"/>
</dbReference>
<dbReference type="PIRSF" id="PIRSF006439">
    <property type="entry name" value="Indolepyruvate_ferr_oxidored"/>
    <property type="match status" value="1"/>
</dbReference>
<dbReference type="SUPFAM" id="SSF54862">
    <property type="entry name" value="4Fe-4S ferredoxins"/>
    <property type="match status" value="1"/>
</dbReference>
<dbReference type="SUPFAM" id="SSF52518">
    <property type="entry name" value="Thiamin diphosphate-binding fold (THDP-binding)"/>
    <property type="match status" value="2"/>
</dbReference>
<dbReference type="SUPFAM" id="SSF52922">
    <property type="entry name" value="TK C-terminal domain-like"/>
    <property type="match status" value="1"/>
</dbReference>
<dbReference type="PROSITE" id="PS00198">
    <property type="entry name" value="4FE4S_FER_1"/>
    <property type="match status" value="1"/>
</dbReference>
<dbReference type="PROSITE" id="PS51379">
    <property type="entry name" value="4FE4S_FER_2"/>
    <property type="match status" value="2"/>
</dbReference>
<accession>O27880</accession>
<comment type="function">
    <text evidence="1">Catalyzes the ferredoxin-dependent oxidative decarboxylation of arylpyruvates.</text>
</comment>
<comment type="catalytic activity">
    <reaction>
        <text>indole-3-pyruvate + 2 oxidized [2Fe-2S]-[ferredoxin] + CoA = (indol-3-yl)acetyl-CoA + 2 reduced [2Fe-2S]-[ferredoxin] + CO2 + H(+)</text>
        <dbReference type="Rhea" id="RHEA:12645"/>
        <dbReference type="Rhea" id="RHEA-COMP:10000"/>
        <dbReference type="Rhea" id="RHEA-COMP:10001"/>
        <dbReference type="ChEBI" id="CHEBI:15378"/>
        <dbReference type="ChEBI" id="CHEBI:16526"/>
        <dbReference type="ChEBI" id="CHEBI:17640"/>
        <dbReference type="ChEBI" id="CHEBI:33737"/>
        <dbReference type="ChEBI" id="CHEBI:33738"/>
        <dbReference type="ChEBI" id="CHEBI:57271"/>
        <dbReference type="ChEBI" id="CHEBI:57287"/>
        <dbReference type="EC" id="1.2.7.8"/>
    </reaction>
</comment>
<comment type="cofactor">
    <cofactor evidence="2">
        <name>[4Fe-4S] cluster</name>
        <dbReference type="ChEBI" id="CHEBI:49883"/>
    </cofactor>
    <text evidence="2">Binds 2 [4Fe-4S] clusters. In this family the first cluster has a non-standard and varying [4Fe-4S] binding motif CX(2)CX(2)CX(4-5)CP.</text>
</comment>
<comment type="subunit">
    <text>Heterodimer of the IorA and IorB subunits.</text>
</comment>